<evidence type="ECO:0000250" key="1">
    <source>
        <dbReference type="UniProtKB" id="Q42578"/>
    </source>
</evidence>
<evidence type="ECO:0000255" key="2"/>
<evidence type="ECO:0000255" key="3">
    <source>
        <dbReference type="PROSITE-ProRule" id="PRU00297"/>
    </source>
</evidence>
<evidence type="ECO:0000255" key="4">
    <source>
        <dbReference type="PROSITE-ProRule" id="PRU10012"/>
    </source>
</evidence>
<evidence type="ECO:0000305" key="5"/>
<keyword id="KW-0106">Calcium</keyword>
<keyword id="KW-1015">Disulfide bond</keyword>
<keyword id="KW-0325">Glycoprotein</keyword>
<keyword id="KW-0349">Heme</keyword>
<keyword id="KW-0376">Hydrogen peroxide</keyword>
<keyword id="KW-0408">Iron</keyword>
<keyword id="KW-0479">Metal-binding</keyword>
<keyword id="KW-0560">Oxidoreductase</keyword>
<keyword id="KW-0575">Peroxidase</keyword>
<keyword id="KW-0873">Pyrrolidone carboxylic acid</keyword>
<keyword id="KW-1185">Reference proteome</keyword>
<keyword id="KW-0964">Secreted</keyword>
<keyword id="KW-0732">Signal</keyword>
<keyword id="KW-0926">Vacuole</keyword>
<reference key="1">
    <citation type="journal article" date="2002" name="Eur. J. Biochem.">
        <title>Structural diversity and transcription of class III peroxidases from Arabidopsis thaliana.</title>
        <authorList>
            <person name="Welinder K.G."/>
            <person name="Justesen A.F."/>
            <person name="Kjaersgaard I.V.H."/>
            <person name="Jensen R.B."/>
            <person name="Rasmussen S.K."/>
            <person name="Jespersen H.M."/>
            <person name="Duroux L."/>
        </authorList>
    </citation>
    <scope>NUCLEOTIDE SEQUENCE [MRNA]</scope>
    <source>
        <strain>cv. Columbia</strain>
        <tissue>Root</tissue>
    </source>
</reference>
<reference key="2">
    <citation type="journal article" date="1999" name="Nature">
        <title>Sequence and analysis of chromosome 4 of the plant Arabidopsis thaliana.</title>
        <authorList>
            <person name="Mayer K.F.X."/>
            <person name="Schueller C."/>
            <person name="Wambutt R."/>
            <person name="Murphy G."/>
            <person name="Volckaert G."/>
            <person name="Pohl T."/>
            <person name="Duesterhoeft A."/>
            <person name="Stiekema W."/>
            <person name="Entian K.-D."/>
            <person name="Terryn N."/>
            <person name="Harris B."/>
            <person name="Ansorge W."/>
            <person name="Brandt P."/>
            <person name="Grivell L.A."/>
            <person name="Rieger M."/>
            <person name="Weichselgartner M."/>
            <person name="de Simone V."/>
            <person name="Obermaier B."/>
            <person name="Mache R."/>
            <person name="Mueller M."/>
            <person name="Kreis M."/>
            <person name="Delseny M."/>
            <person name="Puigdomenech P."/>
            <person name="Watson M."/>
            <person name="Schmidtheini T."/>
            <person name="Reichert B."/>
            <person name="Portetelle D."/>
            <person name="Perez-Alonso M."/>
            <person name="Boutry M."/>
            <person name="Bancroft I."/>
            <person name="Vos P."/>
            <person name="Hoheisel J."/>
            <person name="Zimmermann W."/>
            <person name="Wedler H."/>
            <person name="Ridley P."/>
            <person name="Langham S.-A."/>
            <person name="McCullagh B."/>
            <person name="Bilham L."/>
            <person name="Robben J."/>
            <person name="van der Schueren J."/>
            <person name="Grymonprez B."/>
            <person name="Chuang Y.-J."/>
            <person name="Vandenbussche F."/>
            <person name="Braeken M."/>
            <person name="Weltjens I."/>
            <person name="Voet M."/>
            <person name="Bastiaens I."/>
            <person name="Aert R."/>
            <person name="Defoor E."/>
            <person name="Weitzenegger T."/>
            <person name="Bothe G."/>
            <person name="Ramsperger U."/>
            <person name="Hilbert H."/>
            <person name="Braun M."/>
            <person name="Holzer E."/>
            <person name="Brandt A."/>
            <person name="Peters S."/>
            <person name="van Staveren M."/>
            <person name="Dirkse W."/>
            <person name="Mooijman P."/>
            <person name="Klein Lankhorst R."/>
            <person name="Rose M."/>
            <person name="Hauf J."/>
            <person name="Koetter P."/>
            <person name="Berneiser S."/>
            <person name="Hempel S."/>
            <person name="Feldpausch M."/>
            <person name="Lamberth S."/>
            <person name="Van den Daele H."/>
            <person name="De Keyser A."/>
            <person name="Buysshaert C."/>
            <person name="Gielen J."/>
            <person name="Villarroel R."/>
            <person name="De Clercq R."/>
            <person name="van Montagu M."/>
            <person name="Rogers J."/>
            <person name="Cronin A."/>
            <person name="Quail M.A."/>
            <person name="Bray-Allen S."/>
            <person name="Clark L."/>
            <person name="Doggett J."/>
            <person name="Hall S."/>
            <person name="Kay M."/>
            <person name="Lennard N."/>
            <person name="McLay K."/>
            <person name="Mayes R."/>
            <person name="Pettett A."/>
            <person name="Rajandream M.A."/>
            <person name="Lyne M."/>
            <person name="Benes V."/>
            <person name="Rechmann S."/>
            <person name="Borkova D."/>
            <person name="Bloecker H."/>
            <person name="Scharfe M."/>
            <person name="Grimm M."/>
            <person name="Loehnert T.-H."/>
            <person name="Dose S."/>
            <person name="de Haan M."/>
            <person name="Maarse A.C."/>
            <person name="Schaefer M."/>
            <person name="Mueller-Auer S."/>
            <person name="Gabel C."/>
            <person name="Fuchs M."/>
            <person name="Fartmann B."/>
            <person name="Granderath K."/>
            <person name="Dauner D."/>
            <person name="Herzl A."/>
            <person name="Neumann S."/>
            <person name="Argiriou A."/>
            <person name="Vitale D."/>
            <person name="Liguori R."/>
            <person name="Piravandi E."/>
            <person name="Massenet O."/>
            <person name="Quigley F."/>
            <person name="Clabauld G."/>
            <person name="Muendlein A."/>
            <person name="Felber R."/>
            <person name="Schnabl S."/>
            <person name="Hiller R."/>
            <person name="Schmidt W."/>
            <person name="Lecharny A."/>
            <person name="Aubourg S."/>
            <person name="Chefdor F."/>
            <person name="Cooke R."/>
            <person name="Berger C."/>
            <person name="Monfort A."/>
            <person name="Casacuberta E."/>
            <person name="Gibbons T."/>
            <person name="Weber N."/>
            <person name="Vandenbol M."/>
            <person name="Bargues M."/>
            <person name="Terol J."/>
            <person name="Torres A."/>
            <person name="Perez-Perez A."/>
            <person name="Purnelle B."/>
            <person name="Bent E."/>
            <person name="Johnson S."/>
            <person name="Tacon D."/>
            <person name="Jesse T."/>
            <person name="Heijnen L."/>
            <person name="Schwarz S."/>
            <person name="Scholler P."/>
            <person name="Heber S."/>
            <person name="Francs P."/>
            <person name="Bielke C."/>
            <person name="Frishman D."/>
            <person name="Haase D."/>
            <person name="Lemcke K."/>
            <person name="Mewes H.-W."/>
            <person name="Stocker S."/>
            <person name="Zaccaria P."/>
            <person name="Bevan M."/>
            <person name="Wilson R.K."/>
            <person name="de la Bastide M."/>
            <person name="Habermann K."/>
            <person name="Parnell L."/>
            <person name="Dedhia N."/>
            <person name="Gnoj L."/>
            <person name="Schutz K."/>
            <person name="Huang E."/>
            <person name="Spiegel L."/>
            <person name="Sekhon M."/>
            <person name="Murray J."/>
            <person name="Sheet P."/>
            <person name="Cordes M."/>
            <person name="Abu-Threideh J."/>
            <person name="Stoneking T."/>
            <person name="Kalicki J."/>
            <person name="Graves T."/>
            <person name="Harmon G."/>
            <person name="Edwards J."/>
            <person name="Latreille P."/>
            <person name="Courtney L."/>
            <person name="Cloud J."/>
            <person name="Abbott A."/>
            <person name="Scott K."/>
            <person name="Johnson D."/>
            <person name="Minx P."/>
            <person name="Bentley D."/>
            <person name="Fulton B."/>
            <person name="Miller N."/>
            <person name="Greco T."/>
            <person name="Kemp K."/>
            <person name="Kramer J."/>
            <person name="Fulton L."/>
            <person name="Mardis E."/>
            <person name="Dante M."/>
            <person name="Pepin K."/>
            <person name="Hillier L.W."/>
            <person name="Nelson J."/>
            <person name="Spieth J."/>
            <person name="Ryan E."/>
            <person name="Andrews S."/>
            <person name="Geisel C."/>
            <person name="Layman D."/>
            <person name="Du H."/>
            <person name="Ali J."/>
            <person name="Berghoff A."/>
            <person name="Jones K."/>
            <person name="Drone K."/>
            <person name="Cotton M."/>
            <person name="Joshu C."/>
            <person name="Antonoiu B."/>
            <person name="Zidanic M."/>
            <person name="Strong C."/>
            <person name="Sun H."/>
            <person name="Lamar B."/>
            <person name="Yordan C."/>
            <person name="Ma P."/>
            <person name="Zhong J."/>
            <person name="Preston R."/>
            <person name="Vil D."/>
            <person name="Shekher M."/>
            <person name="Matero A."/>
            <person name="Shah R."/>
            <person name="Swaby I.K."/>
            <person name="O'Shaughnessy A."/>
            <person name="Rodriguez M."/>
            <person name="Hoffman J."/>
            <person name="Till S."/>
            <person name="Granat S."/>
            <person name="Shohdy N."/>
            <person name="Hasegawa A."/>
            <person name="Hameed A."/>
            <person name="Lodhi M."/>
            <person name="Johnson A."/>
            <person name="Chen E."/>
            <person name="Marra M.A."/>
            <person name="Martienssen R."/>
            <person name="McCombie W.R."/>
        </authorList>
    </citation>
    <scope>NUCLEOTIDE SEQUENCE [LARGE SCALE GENOMIC DNA]</scope>
    <source>
        <strain>cv. Columbia</strain>
    </source>
</reference>
<reference key="3">
    <citation type="journal article" date="2017" name="Plant J.">
        <title>Araport11: a complete reannotation of the Arabidopsis thaliana reference genome.</title>
        <authorList>
            <person name="Cheng C.Y."/>
            <person name="Krishnakumar V."/>
            <person name="Chan A.P."/>
            <person name="Thibaud-Nissen F."/>
            <person name="Schobel S."/>
            <person name="Town C.D."/>
        </authorList>
    </citation>
    <scope>GENOME REANNOTATION</scope>
    <source>
        <strain>cv. Columbia</strain>
    </source>
</reference>
<reference key="4">
    <citation type="journal article" date="2003" name="Science">
        <title>Empirical analysis of transcriptional activity in the Arabidopsis genome.</title>
        <authorList>
            <person name="Yamada K."/>
            <person name="Lim J."/>
            <person name="Dale J.M."/>
            <person name="Chen H."/>
            <person name="Shinn P."/>
            <person name="Palm C.J."/>
            <person name="Southwick A.M."/>
            <person name="Wu H.C."/>
            <person name="Kim C.J."/>
            <person name="Nguyen M."/>
            <person name="Pham P.K."/>
            <person name="Cheuk R.F."/>
            <person name="Karlin-Newmann G."/>
            <person name="Liu S.X."/>
            <person name="Lam B."/>
            <person name="Sakano H."/>
            <person name="Wu T."/>
            <person name="Yu G."/>
            <person name="Miranda M."/>
            <person name="Quach H.L."/>
            <person name="Tripp M."/>
            <person name="Chang C.H."/>
            <person name="Lee J.M."/>
            <person name="Toriumi M.J."/>
            <person name="Chan M.M."/>
            <person name="Tang C.C."/>
            <person name="Onodera C.S."/>
            <person name="Deng J.M."/>
            <person name="Akiyama K."/>
            <person name="Ansari Y."/>
            <person name="Arakawa T."/>
            <person name="Banh J."/>
            <person name="Banno F."/>
            <person name="Bowser L."/>
            <person name="Brooks S.Y."/>
            <person name="Carninci P."/>
            <person name="Chao Q."/>
            <person name="Choy N."/>
            <person name="Enju A."/>
            <person name="Goldsmith A.D."/>
            <person name="Gurjal M."/>
            <person name="Hansen N.F."/>
            <person name="Hayashizaki Y."/>
            <person name="Johnson-Hopson C."/>
            <person name="Hsuan V.W."/>
            <person name="Iida K."/>
            <person name="Karnes M."/>
            <person name="Khan S."/>
            <person name="Koesema E."/>
            <person name="Ishida J."/>
            <person name="Jiang P.X."/>
            <person name="Jones T."/>
            <person name="Kawai J."/>
            <person name="Kamiya A."/>
            <person name="Meyers C."/>
            <person name="Nakajima M."/>
            <person name="Narusaka M."/>
            <person name="Seki M."/>
            <person name="Sakurai T."/>
            <person name="Satou M."/>
            <person name="Tamse R."/>
            <person name="Vaysberg M."/>
            <person name="Wallender E.K."/>
            <person name="Wong C."/>
            <person name="Yamamura Y."/>
            <person name="Yuan S."/>
            <person name="Shinozaki K."/>
            <person name="Davis R.W."/>
            <person name="Theologis A."/>
            <person name="Ecker J.R."/>
        </authorList>
    </citation>
    <scope>NUCLEOTIDE SEQUENCE [LARGE SCALE MRNA]</scope>
    <source>
        <strain>cv. Columbia</strain>
    </source>
</reference>
<reference key="5">
    <citation type="journal article" date="2002" name="Gene">
        <title>Analysis and expression of the class III peroxidase large gene family in Arabidopsis thaliana.</title>
        <authorList>
            <person name="Tognolli M."/>
            <person name="Penel C."/>
            <person name="Greppin H."/>
            <person name="Simon P."/>
        </authorList>
    </citation>
    <scope>GENE FAMILY ORGANIZATION</scope>
    <scope>NOMENCLATURE</scope>
    <source>
        <strain>cv. Columbia</strain>
    </source>
</reference>
<proteinExistence type="evidence at transcript level"/>
<comment type="function">
    <text>Removal of H(2)O(2), oxidation of toxic reductants, biosynthesis and degradation of lignin, suberization, auxin catabolism, response to environmental stresses such as wounding, pathogen attack and oxidative stress. These functions might be dependent on each isozyme/isoform in each plant tissue.</text>
</comment>
<comment type="catalytic activity">
    <reaction>
        <text>2 a phenolic donor + H2O2 = 2 a phenolic radical donor + 2 H2O</text>
        <dbReference type="Rhea" id="RHEA:56136"/>
        <dbReference type="ChEBI" id="CHEBI:15377"/>
        <dbReference type="ChEBI" id="CHEBI:16240"/>
        <dbReference type="ChEBI" id="CHEBI:139520"/>
        <dbReference type="ChEBI" id="CHEBI:139521"/>
        <dbReference type="EC" id="1.11.1.7"/>
    </reaction>
</comment>
<comment type="cofactor">
    <cofactor evidence="3">
        <name>heme b</name>
        <dbReference type="ChEBI" id="CHEBI:60344"/>
    </cofactor>
    <text evidence="3">Binds 1 heme b (iron(II)-protoporphyrin IX) group per subunit.</text>
</comment>
<comment type="cofactor">
    <cofactor evidence="3">
        <name>Ca(2+)</name>
        <dbReference type="ChEBI" id="CHEBI:29108"/>
    </cofactor>
    <text evidence="3">Binds 2 calcium ions per subunit.</text>
</comment>
<comment type="subcellular location">
    <subcellularLocation>
        <location evidence="5">Secreted</location>
    </subcellularLocation>
    <subcellularLocation>
        <location evidence="5">Vacuole</location>
    </subcellularLocation>
    <text>Carboxy-terminal extension appears to target the protein to vacuoles.</text>
</comment>
<comment type="miscellaneous">
    <text>There are 73 peroxidase genes in A.thaliana.</text>
</comment>
<comment type="similarity">
    <text evidence="3">Belongs to the peroxidase family. Classical plant (class III) peroxidase subfamily.</text>
</comment>
<organism>
    <name type="scientific">Arabidopsis thaliana</name>
    <name type="common">Mouse-ear cress</name>
    <dbReference type="NCBI Taxonomy" id="3702"/>
    <lineage>
        <taxon>Eukaryota</taxon>
        <taxon>Viridiplantae</taxon>
        <taxon>Streptophyta</taxon>
        <taxon>Embryophyta</taxon>
        <taxon>Tracheophyta</taxon>
        <taxon>Spermatophyta</taxon>
        <taxon>Magnoliopsida</taxon>
        <taxon>eudicotyledons</taxon>
        <taxon>Gunneridae</taxon>
        <taxon>Pentapetalae</taxon>
        <taxon>rosids</taxon>
        <taxon>malvids</taxon>
        <taxon>Brassicales</taxon>
        <taxon>Brassicaceae</taxon>
        <taxon>Camelineae</taxon>
        <taxon>Arabidopsis</taxon>
    </lineage>
</organism>
<accession>Q9LDN9</accession>
<accession>Q8L7B3</accession>
<dbReference type="EC" id="1.11.1.7"/>
<dbReference type="EMBL" id="AF452387">
    <property type="protein sequence ID" value="AAL40851.1"/>
    <property type="molecule type" value="mRNA"/>
</dbReference>
<dbReference type="EMBL" id="AL161512">
    <property type="protein sequence ID" value="CAB78002.1"/>
    <property type="molecule type" value="Genomic_DNA"/>
</dbReference>
<dbReference type="EMBL" id="AL161813">
    <property type="protein sequence ID" value="CAB82113.1"/>
    <property type="molecule type" value="Genomic_DNA"/>
</dbReference>
<dbReference type="EMBL" id="CP002687">
    <property type="protein sequence ID" value="AEE82676.1"/>
    <property type="molecule type" value="Genomic_DNA"/>
</dbReference>
<dbReference type="EMBL" id="AY136364">
    <property type="protein sequence ID" value="AAM97030.1"/>
    <property type="molecule type" value="mRNA"/>
</dbReference>
<dbReference type="EMBL" id="BT000180">
    <property type="protein sequence ID" value="AAN15499.1"/>
    <property type="molecule type" value="mRNA"/>
</dbReference>
<dbReference type="PIR" id="B85088">
    <property type="entry name" value="B85088"/>
</dbReference>
<dbReference type="RefSeq" id="NP_192617.1">
    <property type="nucleotide sequence ID" value="NM_116947.3"/>
</dbReference>
<dbReference type="SMR" id="Q9LDN9"/>
<dbReference type="BioGRID" id="11746">
    <property type="interactions" value="2"/>
</dbReference>
<dbReference type="FunCoup" id="Q9LDN9">
    <property type="interactions" value="132"/>
</dbReference>
<dbReference type="STRING" id="3702.Q9LDN9"/>
<dbReference type="PeroxiBase" id="203">
    <property type="entry name" value="AtPrx37"/>
</dbReference>
<dbReference type="GlyCosmos" id="Q9LDN9">
    <property type="glycosylation" value="3 sites, No reported glycans"/>
</dbReference>
<dbReference type="GlyGen" id="Q9LDN9">
    <property type="glycosylation" value="3 sites"/>
</dbReference>
<dbReference type="MetOSite" id="Q9LDN9"/>
<dbReference type="PaxDb" id="3702-AT4G08770.1"/>
<dbReference type="ProteomicsDB" id="236298"/>
<dbReference type="EnsemblPlants" id="AT4G08770.1">
    <property type="protein sequence ID" value="AT4G08770.1"/>
    <property type="gene ID" value="AT4G08770"/>
</dbReference>
<dbReference type="GeneID" id="826447"/>
<dbReference type="Gramene" id="AT4G08770.1">
    <property type="protein sequence ID" value="AT4G08770.1"/>
    <property type="gene ID" value="AT4G08770"/>
</dbReference>
<dbReference type="KEGG" id="ath:AT4G08770"/>
<dbReference type="Araport" id="AT4G08770"/>
<dbReference type="TAIR" id="AT4G08770">
    <property type="gene designation" value="PRX37"/>
</dbReference>
<dbReference type="eggNOG" id="ENOG502QVXS">
    <property type="taxonomic scope" value="Eukaryota"/>
</dbReference>
<dbReference type="HOGENOM" id="CLU_010543_0_1_1"/>
<dbReference type="InParanoid" id="Q9LDN9"/>
<dbReference type="OMA" id="ARCTFIT"/>
<dbReference type="PhylomeDB" id="Q9LDN9"/>
<dbReference type="BioCyc" id="ARA:AT4G08770-MONOMER"/>
<dbReference type="PRO" id="PR:Q9LDN9"/>
<dbReference type="Proteomes" id="UP000006548">
    <property type="component" value="Chromosome 4"/>
</dbReference>
<dbReference type="ExpressionAtlas" id="Q9LDN9">
    <property type="expression patterns" value="baseline and differential"/>
</dbReference>
<dbReference type="GO" id="GO:0005576">
    <property type="term" value="C:extracellular region"/>
    <property type="evidence" value="ECO:0007669"/>
    <property type="project" value="UniProtKB-SubCell"/>
</dbReference>
<dbReference type="GO" id="GO:0000325">
    <property type="term" value="C:plant-type vacuole"/>
    <property type="evidence" value="ECO:0007005"/>
    <property type="project" value="TAIR"/>
</dbReference>
<dbReference type="GO" id="GO:0020037">
    <property type="term" value="F:heme binding"/>
    <property type="evidence" value="ECO:0007669"/>
    <property type="project" value="InterPro"/>
</dbReference>
<dbReference type="GO" id="GO:0140825">
    <property type="term" value="F:lactoperoxidase activity"/>
    <property type="evidence" value="ECO:0007669"/>
    <property type="project" value="UniProtKB-EC"/>
</dbReference>
<dbReference type="GO" id="GO:0046872">
    <property type="term" value="F:metal ion binding"/>
    <property type="evidence" value="ECO:0007669"/>
    <property type="project" value="UniProtKB-KW"/>
</dbReference>
<dbReference type="GO" id="GO:0042744">
    <property type="term" value="P:hydrogen peroxide catabolic process"/>
    <property type="evidence" value="ECO:0007669"/>
    <property type="project" value="UniProtKB-KW"/>
</dbReference>
<dbReference type="GO" id="GO:0045926">
    <property type="term" value="P:negative regulation of growth"/>
    <property type="evidence" value="ECO:0000315"/>
    <property type="project" value="TAIR"/>
</dbReference>
<dbReference type="GO" id="GO:0006979">
    <property type="term" value="P:response to oxidative stress"/>
    <property type="evidence" value="ECO:0007669"/>
    <property type="project" value="InterPro"/>
</dbReference>
<dbReference type="CDD" id="cd00693">
    <property type="entry name" value="secretory_peroxidase"/>
    <property type="match status" value="1"/>
</dbReference>
<dbReference type="FunFam" id="1.10.420.10:FF:000001">
    <property type="entry name" value="Peroxidase"/>
    <property type="match status" value="1"/>
</dbReference>
<dbReference type="FunFam" id="1.10.520.10:FF:000001">
    <property type="entry name" value="Peroxidase"/>
    <property type="match status" value="1"/>
</dbReference>
<dbReference type="Gene3D" id="1.10.520.10">
    <property type="match status" value="1"/>
</dbReference>
<dbReference type="Gene3D" id="1.10.420.10">
    <property type="entry name" value="Peroxidase, domain 2"/>
    <property type="match status" value="1"/>
</dbReference>
<dbReference type="InterPro" id="IPR002016">
    <property type="entry name" value="Haem_peroxidase"/>
</dbReference>
<dbReference type="InterPro" id="IPR010255">
    <property type="entry name" value="Haem_peroxidase_sf"/>
</dbReference>
<dbReference type="InterPro" id="IPR000823">
    <property type="entry name" value="Peroxidase_pln"/>
</dbReference>
<dbReference type="InterPro" id="IPR019794">
    <property type="entry name" value="Peroxidases_AS"/>
</dbReference>
<dbReference type="InterPro" id="IPR019793">
    <property type="entry name" value="Peroxidases_heam-ligand_BS"/>
</dbReference>
<dbReference type="InterPro" id="IPR033905">
    <property type="entry name" value="Secretory_peroxidase"/>
</dbReference>
<dbReference type="PANTHER" id="PTHR31388:SF113">
    <property type="entry name" value="PEROXIDASE 37-RELATED"/>
    <property type="match status" value="1"/>
</dbReference>
<dbReference type="PANTHER" id="PTHR31388">
    <property type="entry name" value="PEROXIDASE 72-RELATED"/>
    <property type="match status" value="1"/>
</dbReference>
<dbReference type="Pfam" id="PF00141">
    <property type="entry name" value="peroxidase"/>
    <property type="match status" value="1"/>
</dbReference>
<dbReference type="PRINTS" id="PR00458">
    <property type="entry name" value="PEROXIDASE"/>
</dbReference>
<dbReference type="PRINTS" id="PR00461">
    <property type="entry name" value="PLPEROXIDASE"/>
</dbReference>
<dbReference type="SUPFAM" id="SSF48113">
    <property type="entry name" value="Heme-dependent peroxidases"/>
    <property type="match status" value="1"/>
</dbReference>
<dbReference type="PROSITE" id="PS00435">
    <property type="entry name" value="PEROXIDASE_1"/>
    <property type="match status" value="1"/>
</dbReference>
<dbReference type="PROSITE" id="PS00436">
    <property type="entry name" value="PEROXIDASE_2"/>
    <property type="match status" value="1"/>
</dbReference>
<dbReference type="PROSITE" id="PS50873">
    <property type="entry name" value="PEROXIDASE_4"/>
    <property type="match status" value="1"/>
</dbReference>
<sequence length="346" mass="38203">MHSSLIKLGFLLLLIQVSLSHAQLSPSFYDKTCPQVFDIATTTIVNALRSDPRIAASILRLHFHDCFVNGCDASILLDNTTSFRTEKDAFGNANSARGFDVIDKMKAAVEKACPKTVSCADLLAIAAQESVVLAGGPSWRVPNGRRDSLRGFMDLANDNLPAPFFTLNQLKDRFKNVGLDRASDLVALSGGHTFGKNQCQFIMDRLYNFSNTGLPDPTLDKSYLSTLRKQCPRNGNQSVLVDFDLRTPTLFDNKYYVNLKENKGLIQSDQELFSSPDASDTLPLVREYADGQGKFFDAFAKAMIRMSSLSPLTGKQGEIRLNCRVVNSKSKIMDVVEDALEFASSM</sequence>
<protein>
    <recommendedName>
        <fullName>Peroxidase 37</fullName>
        <shortName>Atperox P37</shortName>
        <ecNumber>1.11.1.7</ecNumber>
    </recommendedName>
    <alternativeName>
        <fullName>ATP38</fullName>
    </alternativeName>
</protein>
<gene>
    <name type="primary">PER37</name>
    <name type="synonym">P37</name>
    <name type="ordered locus">At4g08770</name>
    <name type="ORF">T32A17.80</name>
</gene>
<name>PER37_ARATH</name>
<feature type="signal peptide" evidence="2">
    <location>
        <begin position="1"/>
        <end position="22"/>
    </location>
</feature>
<feature type="chain" id="PRO_0000023703" description="Peroxidase 37">
    <location>
        <begin position="23"/>
        <end position="346"/>
    </location>
</feature>
<feature type="active site" description="Proton acceptor" evidence="3 4">
    <location>
        <position position="64"/>
    </location>
</feature>
<feature type="binding site" evidence="3">
    <location>
        <position position="65"/>
    </location>
    <ligand>
        <name>Ca(2+)</name>
        <dbReference type="ChEBI" id="CHEBI:29108"/>
        <label>1</label>
    </ligand>
</feature>
<feature type="binding site" evidence="3">
    <location>
        <position position="68"/>
    </location>
    <ligand>
        <name>Ca(2+)</name>
        <dbReference type="ChEBI" id="CHEBI:29108"/>
        <label>1</label>
    </ligand>
</feature>
<feature type="binding site" evidence="3">
    <location>
        <position position="70"/>
    </location>
    <ligand>
        <name>Ca(2+)</name>
        <dbReference type="ChEBI" id="CHEBI:29108"/>
        <label>1</label>
    </ligand>
</feature>
<feature type="binding site" evidence="3">
    <location>
        <position position="72"/>
    </location>
    <ligand>
        <name>Ca(2+)</name>
        <dbReference type="ChEBI" id="CHEBI:29108"/>
        <label>1</label>
    </ligand>
</feature>
<feature type="binding site" evidence="3">
    <location>
        <position position="74"/>
    </location>
    <ligand>
        <name>Ca(2+)</name>
        <dbReference type="ChEBI" id="CHEBI:29108"/>
        <label>1</label>
    </ligand>
</feature>
<feature type="binding site" evidence="3">
    <location>
        <position position="161"/>
    </location>
    <ligand>
        <name>substrate</name>
    </ligand>
</feature>
<feature type="binding site" description="axial binding residue" evidence="3">
    <location>
        <position position="192"/>
    </location>
    <ligand>
        <name>heme b</name>
        <dbReference type="ChEBI" id="CHEBI:60344"/>
    </ligand>
    <ligandPart>
        <name>Fe</name>
        <dbReference type="ChEBI" id="CHEBI:18248"/>
    </ligandPart>
</feature>
<feature type="binding site" evidence="3">
    <location>
        <position position="193"/>
    </location>
    <ligand>
        <name>Ca(2+)</name>
        <dbReference type="ChEBI" id="CHEBI:29108"/>
        <label>2</label>
    </ligand>
</feature>
<feature type="binding site" evidence="3">
    <location>
        <position position="244"/>
    </location>
    <ligand>
        <name>Ca(2+)</name>
        <dbReference type="ChEBI" id="CHEBI:29108"/>
        <label>2</label>
    </ligand>
</feature>
<feature type="binding site" evidence="3">
    <location>
        <position position="247"/>
    </location>
    <ligand>
        <name>Ca(2+)</name>
        <dbReference type="ChEBI" id="CHEBI:29108"/>
        <label>2</label>
    </ligand>
</feature>
<feature type="binding site" evidence="3">
    <location>
        <position position="252"/>
    </location>
    <ligand>
        <name>Ca(2+)</name>
        <dbReference type="ChEBI" id="CHEBI:29108"/>
        <label>2</label>
    </ligand>
</feature>
<feature type="site" description="Transition state stabilizer" evidence="3">
    <location>
        <position position="60"/>
    </location>
</feature>
<feature type="modified residue" description="Pyrrolidone carboxylic acid" evidence="1 3">
    <location>
        <position position="23"/>
    </location>
</feature>
<feature type="glycosylation site" description="N-linked (GlcNAc...) asparagine" evidence="2">
    <location>
        <position position="79"/>
    </location>
</feature>
<feature type="glycosylation site" description="N-linked (GlcNAc...) asparagine" evidence="2">
    <location>
        <position position="208"/>
    </location>
</feature>
<feature type="glycosylation site" description="N-linked (GlcNAc...) asparagine" evidence="2">
    <location>
        <position position="236"/>
    </location>
</feature>
<feature type="disulfide bond" evidence="3">
    <location>
        <begin position="33"/>
        <end position="113"/>
    </location>
</feature>
<feature type="disulfide bond" evidence="3">
    <location>
        <begin position="66"/>
        <end position="71"/>
    </location>
</feature>
<feature type="disulfide bond" evidence="3">
    <location>
        <begin position="119"/>
        <end position="323"/>
    </location>
</feature>
<feature type="disulfide bond" evidence="3">
    <location>
        <begin position="199"/>
        <end position="231"/>
    </location>
</feature>
<feature type="sequence conflict" description="In Ref. 4; AAM97030/AAN15499." evidence="5" ref="4">
    <original>F</original>
    <variation>L</variation>
    <location>
        <position position="28"/>
    </location>
</feature>